<proteinExistence type="inferred from homology"/>
<dbReference type="EMBL" id="AE013598">
    <property type="protein sequence ID" value="AAW76838.1"/>
    <property type="molecule type" value="Genomic_DNA"/>
</dbReference>
<dbReference type="SMR" id="Q5GWT3"/>
<dbReference type="STRING" id="291331.XOO3584"/>
<dbReference type="KEGG" id="xoo:XOO3584"/>
<dbReference type="HOGENOM" id="CLU_044142_4_1_6"/>
<dbReference type="Proteomes" id="UP000006735">
    <property type="component" value="Chromosome"/>
</dbReference>
<dbReference type="GO" id="GO:0022625">
    <property type="term" value="C:cytosolic large ribosomal subunit"/>
    <property type="evidence" value="ECO:0007669"/>
    <property type="project" value="TreeGrafter"/>
</dbReference>
<dbReference type="GO" id="GO:0019843">
    <property type="term" value="F:rRNA binding"/>
    <property type="evidence" value="ECO:0007669"/>
    <property type="project" value="UniProtKB-UniRule"/>
</dbReference>
<dbReference type="GO" id="GO:0003735">
    <property type="term" value="F:structural constituent of ribosome"/>
    <property type="evidence" value="ECO:0007669"/>
    <property type="project" value="InterPro"/>
</dbReference>
<dbReference type="GO" id="GO:0006412">
    <property type="term" value="P:translation"/>
    <property type="evidence" value="ECO:0007669"/>
    <property type="project" value="UniProtKB-UniRule"/>
</dbReference>
<dbReference type="FunFam" id="2.40.30.10:FF:000004">
    <property type="entry name" value="50S ribosomal protein L3"/>
    <property type="match status" value="1"/>
</dbReference>
<dbReference type="FunFam" id="3.30.160.810:FF:000001">
    <property type="entry name" value="50S ribosomal protein L3"/>
    <property type="match status" value="1"/>
</dbReference>
<dbReference type="Gene3D" id="3.30.160.810">
    <property type="match status" value="1"/>
</dbReference>
<dbReference type="Gene3D" id="2.40.30.10">
    <property type="entry name" value="Translation factors"/>
    <property type="match status" value="1"/>
</dbReference>
<dbReference type="HAMAP" id="MF_01325_B">
    <property type="entry name" value="Ribosomal_uL3_B"/>
    <property type="match status" value="1"/>
</dbReference>
<dbReference type="InterPro" id="IPR000597">
    <property type="entry name" value="Ribosomal_uL3"/>
</dbReference>
<dbReference type="InterPro" id="IPR019927">
    <property type="entry name" value="Ribosomal_uL3_bac/org-type"/>
</dbReference>
<dbReference type="InterPro" id="IPR019926">
    <property type="entry name" value="Ribosomal_uL3_CS"/>
</dbReference>
<dbReference type="InterPro" id="IPR009000">
    <property type="entry name" value="Transl_B-barrel_sf"/>
</dbReference>
<dbReference type="NCBIfam" id="TIGR03625">
    <property type="entry name" value="L3_bact"/>
    <property type="match status" value="1"/>
</dbReference>
<dbReference type="PANTHER" id="PTHR11229">
    <property type="entry name" value="50S RIBOSOMAL PROTEIN L3"/>
    <property type="match status" value="1"/>
</dbReference>
<dbReference type="PANTHER" id="PTHR11229:SF16">
    <property type="entry name" value="LARGE RIBOSOMAL SUBUNIT PROTEIN UL3C"/>
    <property type="match status" value="1"/>
</dbReference>
<dbReference type="Pfam" id="PF00297">
    <property type="entry name" value="Ribosomal_L3"/>
    <property type="match status" value="1"/>
</dbReference>
<dbReference type="SUPFAM" id="SSF50447">
    <property type="entry name" value="Translation proteins"/>
    <property type="match status" value="1"/>
</dbReference>
<dbReference type="PROSITE" id="PS00474">
    <property type="entry name" value="RIBOSOMAL_L3"/>
    <property type="match status" value="1"/>
</dbReference>
<sequence length="216" mass="22889">MTKKYSLGFVGRKAGMSRIFTEDGRSVPVTLIEATPNRIAQIKTVEVDGYSAVQITVGARRAALVNKPAAGHFAKAKVEAGRGLWEFRVEDAHLGDFAVGGEIKADIFEVGQKVDVQGVTKGKGFQGTIKRYNFRMGDATHGNSLSHRAPGSLGQRQTPGRVFPGKKMSGHMGAVQQSTQNLEVVKVDVERGLIAIHGAVPGAAGGDVIVRPASKA</sequence>
<evidence type="ECO:0000255" key="1">
    <source>
        <dbReference type="HAMAP-Rule" id="MF_01325"/>
    </source>
</evidence>
<evidence type="ECO:0000305" key="2"/>
<keyword id="KW-0488">Methylation</keyword>
<keyword id="KW-1185">Reference proteome</keyword>
<keyword id="KW-0687">Ribonucleoprotein</keyword>
<keyword id="KW-0689">Ribosomal protein</keyword>
<keyword id="KW-0694">RNA-binding</keyword>
<keyword id="KW-0699">rRNA-binding</keyword>
<reference key="1">
    <citation type="journal article" date="2005" name="Nucleic Acids Res.">
        <title>The genome sequence of Xanthomonas oryzae pathovar oryzae KACC10331, the bacterial blight pathogen of rice.</title>
        <authorList>
            <person name="Lee B.-M."/>
            <person name="Park Y.-J."/>
            <person name="Park D.-S."/>
            <person name="Kang H.-W."/>
            <person name="Kim J.-G."/>
            <person name="Song E.-S."/>
            <person name="Park I.-C."/>
            <person name="Yoon U.-H."/>
            <person name="Hahn J.-H."/>
            <person name="Koo B.-S."/>
            <person name="Lee G.-B."/>
            <person name="Kim H."/>
            <person name="Park H.-S."/>
            <person name="Yoon K.-O."/>
            <person name="Kim J.-H."/>
            <person name="Jung C.-H."/>
            <person name="Koh N.-H."/>
            <person name="Seo J.-S."/>
            <person name="Go S.-J."/>
        </authorList>
    </citation>
    <scope>NUCLEOTIDE SEQUENCE [LARGE SCALE GENOMIC DNA]</scope>
    <source>
        <strain>KACC10331 / KXO85</strain>
    </source>
</reference>
<protein>
    <recommendedName>
        <fullName evidence="1">Large ribosomal subunit protein uL3</fullName>
    </recommendedName>
    <alternativeName>
        <fullName evidence="2">50S ribosomal protein L3</fullName>
    </alternativeName>
</protein>
<accession>Q5GWT3</accession>
<gene>
    <name evidence="1" type="primary">rplC</name>
    <name type="ordered locus">XOO3584</name>
</gene>
<feature type="chain" id="PRO_0000241434" description="Large ribosomal subunit protein uL3">
    <location>
        <begin position="1"/>
        <end position="216"/>
    </location>
</feature>
<feature type="modified residue" description="N5-methylglutamine" evidence="1">
    <location>
        <position position="157"/>
    </location>
</feature>
<organism>
    <name type="scientific">Xanthomonas oryzae pv. oryzae (strain KACC10331 / KXO85)</name>
    <dbReference type="NCBI Taxonomy" id="291331"/>
    <lineage>
        <taxon>Bacteria</taxon>
        <taxon>Pseudomonadati</taxon>
        <taxon>Pseudomonadota</taxon>
        <taxon>Gammaproteobacteria</taxon>
        <taxon>Lysobacterales</taxon>
        <taxon>Lysobacteraceae</taxon>
        <taxon>Xanthomonas</taxon>
    </lineage>
</organism>
<comment type="function">
    <text evidence="1">One of the primary rRNA binding proteins, it binds directly near the 3'-end of the 23S rRNA, where it nucleates assembly of the 50S subunit.</text>
</comment>
<comment type="subunit">
    <text evidence="1">Part of the 50S ribosomal subunit. Forms a cluster with proteins L14 and L19.</text>
</comment>
<comment type="PTM">
    <text evidence="1">Methylated by PrmB.</text>
</comment>
<comment type="similarity">
    <text evidence="1">Belongs to the universal ribosomal protein uL3 family.</text>
</comment>
<name>RL3_XANOR</name>